<sequence>MVAFTPEEVRNLMGKPSNVRNMSVIAHVDHGKSTLTDSLVQKAGIISAAKAGDARFMDTRADEQERGVTIKSTAISLFAEMTDDDMKDMKEPADGTDFLVNLIDSPGHVDFSSEVTAALRVTDGALVVVDTIEGVCVQTETVLRQALGERIRPVVVVNKVDRALLELQISQEELYQNFARVVESVNVVISTYYDKVLGDCQVFPDKGTVAFASGLHGWAFTVRQFANRYAKKFGIDRNKMMQRLWGENYFNPKTKKWSKSATDANGNSNQRAFNMFILDPIYRIFDAVMNSRKDEVFTLLSKLEVTIKPDEKELEGKALLKVVMRKFLPAADALMEMIVLHLPSPKTAQQYRAETLYEGPMDDECAVGIRNCDANAPLMIYVSKMVPTSDRGRFYAFGRVFSGTVRSGLKVRIQGPNYVPGKKDDLFIKAIQRTVLMMGSRIEPIEDCPAGNIIGLVGVDQFLVKSGTLTTSEVAHNMKVMKFSVSPVVQVAVEVKNGNDLPKLVEGLKRLSKSDPCVLCTTSESGEHIVAGAGELHLEICLKDLQEDHAGIPLKISPPVVSYRESVSEPSSMTALSKSPNKHNRIFMTAEPMSEELSVAIETGHVNPRDDFKVRARIMADEFGWDVTDARKIWCFGPDTTGANVVVDQTKAVAYLNEIKDSVVAAFAWASKEGPMFEENLRSCRFNILDVVLHADAIHRGGGQIIPTARRVVYASTLLASPIIQEPVFLVEIQVSENAMGGIYSVLNKKRGHVFSEEQRVGTPLYNIKAYLPVNESFGFTGELRQATAGQAFPQLVFDHWSPMSGDPLDPTSKPGQIVCEARKRKGLKENVPDYTEYYDRL</sequence>
<reference key="1">
    <citation type="journal article" date="1997" name="Gene">
        <title>Comprehensive cloning of Schizosaccharomyces pombe genes encoding translation elongation factors.</title>
        <authorList>
            <person name="Mita K."/>
            <person name="Morimyo M."/>
            <person name="Ito K."/>
            <person name="Sugaya K."/>
            <person name="Ebihara K."/>
            <person name="Hongo E."/>
            <person name="Higashi T."/>
            <person name="Hirayama Y."/>
            <person name="Nakamura Y."/>
        </authorList>
    </citation>
    <scope>NUCLEOTIDE SEQUENCE [GENOMIC DNA] (EFT201 AND EFT202)</scope>
    <source>
        <strain>JY333</strain>
    </source>
</reference>
<reference key="2">
    <citation type="journal article" date="2002" name="Nature">
        <title>The genome sequence of Schizosaccharomyces pombe.</title>
        <authorList>
            <person name="Wood V."/>
            <person name="Gwilliam R."/>
            <person name="Rajandream M.A."/>
            <person name="Lyne M.H."/>
            <person name="Lyne R."/>
            <person name="Stewart A."/>
            <person name="Sgouros J.G."/>
            <person name="Peat N."/>
            <person name="Hayles J."/>
            <person name="Baker S.G."/>
            <person name="Basham D."/>
            <person name="Bowman S."/>
            <person name="Brooks K."/>
            <person name="Brown D."/>
            <person name="Brown S."/>
            <person name="Chillingworth T."/>
            <person name="Churcher C.M."/>
            <person name="Collins M."/>
            <person name="Connor R."/>
            <person name="Cronin A."/>
            <person name="Davis P."/>
            <person name="Feltwell T."/>
            <person name="Fraser A."/>
            <person name="Gentles S."/>
            <person name="Goble A."/>
            <person name="Hamlin N."/>
            <person name="Harris D.E."/>
            <person name="Hidalgo J."/>
            <person name="Hodgson G."/>
            <person name="Holroyd S."/>
            <person name="Hornsby T."/>
            <person name="Howarth S."/>
            <person name="Huckle E.J."/>
            <person name="Hunt S."/>
            <person name="Jagels K."/>
            <person name="James K.D."/>
            <person name="Jones L."/>
            <person name="Jones M."/>
            <person name="Leather S."/>
            <person name="McDonald S."/>
            <person name="McLean J."/>
            <person name="Mooney P."/>
            <person name="Moule S."/>
            <person name="Mungall K.L."/>
            <person name="Murphy L.D."/>
            <person name="Niblett D."/>
            <person name="Odell C."/>
            <person name="Oliver K."/>
            <person name="O'Neil S."/>
            <person name="Pearson D."/>
            <person name="Quail M.A."/>
            <person name="Rabbinowitsch E."/>
            <person name="Rutherford K.M."/>
            <person name="Rutter S."/>
            <person name="Saunders D."/>
            <person name="Seeger K."/>
            <person name="Sharp S."/>
            <person name="Skelton J."/>
            <person name="Simmonds M.N."/>
            <person name="Squares R."/>
            <person name="Squares S."/>
            <person name="Stevens K."/>
            <person name="Taylor K."/>
            <person name="Taylor R.G."/>
            <person name="Tivey A."/>
            <person name="Walsh S.V."/>
            <person name="Warren T."/>
            <person name="Whitehead S."/>
            <person name="Woodward J.R."/>
            <person name="Volckaert G."/>
            <person name="Aert R."/>
            <person name="Robben J."/>
            <person name="Grymonprez B."/>
            <person name="Weltjens I."/>
            <person name="Vanstreels E."/>
            <person name="Rieger M."/>
            <person name="Schaefer M."/>
            <person name="Mueller-Auer S."/>
            <person name="Gabel C."/>
            <person name="Fuchs M."/>
            <person name="Duesterhoeft A."/>
            <person name="Fritzc C."/>
            <person name="Holzer E."/>
            <person name="Moestl D."/>
            <person name="Hilbert H."/>
            <person name="Borzym K."/>
            <person name="Langer I."/>
            <person name="Beck A."/>
            <person name="Lehrach H."/>
            <person name="Reinhardt R."/>
            <person name="Pohl T.M."/>
            <person name="Eger P."/>
            <person name="Zimmermann W."/>
            <person name="Wedler H."/>
            <person name="Wambutt R."/>
            <person name="Purnelle B."/>
            <person name="Goffeau A."/>
            <person name="Cadieu E."/>
            <person name="Dreano S."/>
            <person name="Gloux S."/>
            <person name="Lelaure V."/>
            <person name="Mottier S."/>
            <person name="Galibert F."/>
            <person name="Aves S.J."/>
            <person name="Xiang Z."/>
            <person name="Hunt C."/>
            <person name="Moore K."/>
            <person name="Hurst S.M."/>
            <person name="Lucas M."/>
            <person name="Rochet M."/>
            <person name="Gaillardin C."/>
            <person name="Tallada V.A."/>
            <person name="Garzon A."/>
            <person name="Thode G."/>
            <person name="Daga R.R."/>
            <person name="Cruzado L."/>
            <person name="Jimenez J."/>
            <person name="Sanchez M."/>
            <person name="del Rey F."/>
            <person name="Benito J."/>
            <person name="Dominguez A."/>
            <person name="Revuelta J.L."/>
            <person name="Moreno S."/>
            <person name="Armstrong J."/>
            <person name="Forsburg S.L."/>
            <person name="Cerutti L."/>
            <person name="Lowe T."/>
            <person name="McCombie W.R."/>
            <person name="Paulsen I."/>
            <person name="Potashkin J."/>
            <person name="Shpakovski G.V."/>
            <person name="Ussery D."/>
            <person name="Barrell B.G."/>
            <person name="Nurse P."/>
        </authorList>
    </citation>
    <scope>NUCLEOTIDE SEQUENCE [LARGE SCALE GENOMIC DNA] (EFT201 AND EFT202)</scope>
    <source>
        <strain>972 / ATCC 24843</strain>
    </source>
</reference>
<reference key="3">
    <citation type="journal article" date="1997" name="DNA Res.">
        <title>Identification of open reading frames in Schizosaccharomyces pombe cDNAs.</title>
        <authorList>
            <person name="Yoshioka S."/>
            <person name="Kato K."/>
            <person name="Nakai K."/>
            <person name="Okayama H."/>
            <person name="Nojima H."/>
        </authorList>
    </citation>
    <scope>NUCLEOTIDE SEQUENCE [LARGE SCALE MRNA] OF 177-842 (EFT202)</scope>
    <source>
        <strain>PR745</strain>
    </source>
</reference>
<reference key="4">
    <citation type="journal article" date="2008" name="J. Proteome Res.">
        <title>Phosphoproteome analysis of fission yeast.</title>
        <authorList>
            <person name="Wilson-Grady J.T."/>
            <person name="Villen J."/>
            <person name="Gygi S.P."/>
        </authorList>
    </citation>
    <scope>PHOSPHORYLATION [LARGE SCALE ANALYSIS] AT SER-568 AND THR-574</scope>
    <scope>IDENTIFICATION BY MASS SPECTROMETRY</scope>
</reference>
<gene>
    <name type="primary">eft201</name>
    <name type="synonym">eft2</name>
    <name type="synonym">eft2-1</name>
    <name type="ORF">SPAC513.01c</name>
    <name type="ORF">SPAPYUK71.04c</name>
</gene>
<gene>
    <name type="primary">eft202</name>
    <name type="ORF">SPCP31B10.07</name>
</gene>
<organism>
    <name type="scientific">Schizosaccharomyces pombe (strain 972 / ATCC 24843)</name>
    <name type="common">Fission yeast</name>
    <dbReference type="NCBI Taxonomy" id="284812"/>
    <lineage>
        <taxon>Eukaryota</taxon>
        <taxon>Fungi</taxon>
        <taxon>Dikarya</taxon>
        <taxon>Ascomycota</taxon>
        <taxon>Taphrinomycotina</taxon>
        <taxon>Schizosaccharomycetes</taxon>
        <taxon>Schizosaccharomycetales</taxon>
        <taxon>Schizosaccharomycetaceae</taxon>
        <taxon>Schizosaccharomyces</taxon>
    </lineage>
</organism>
<dbReference type="EMBL" id="D83976">
    <property type="protein sequence ID" value="BAA23591.1"/>
    <property type="molecule type" value="Genomic_DNA"/>
</dbReference>
<dbReference type="EMBL" id="D83975">
    <property type="protein sequence ID" value="BAA23590.1"/>
    <property type="molecule type" value="Genomic_DNA"/>
</dbReference>
<dbReference type="EMBL" id="CU329672">
    <property type="protein sequence ID" value="CAB58373.1"/>
    <property type="molecule type" value="Genomic_DNA"/>
</dbReference>
<dbReference type="EMBL" id="CU329670">
    <property type="protein sequence ID" value="CAB52147.2"/>
    <property type="molecule type" value="Genomic_DNA"/>
</dbReference>
<dbReference type="EMBL" id="D89151">
    <property type="protein sequence ID" value="BAA13813.1"/>
    <property type="status" value="ALT_FRAME"/>
    <property type="molecule type" value="mRNA"/>
</dbReference>
<dbReference type="PIR" id="T41697">
    <property type="entry name" value="T41697"/>
</dbReference>
<dbReference type="RefSeq" id="NP_587863.1">
    <property type="nucleotide sequence ID" value="NM_001022856.2"/>
</dbReference>
<dbReference type="RefSeq" id="XP_001713073.1">
    <property type="nucleotide sequence ID" value="XM_001713021.2"/>
</dbReference>
<dbReference type="SMR" id="O14460"/>
<dbReference type="BioGRID" id="276105">
    <property type="interactions" value="6"/>
</dbReference>
<dbReference type="BioGRID" id="280559">
    <property type="interactions" value="19"/>
</dbReference>
<dbReference type="DIP" id="DIP-57891N"/>
<dbReference type="FunCoup" id="O14460">
    <property type="interactions" value="532"/>
</dbReference>
<dbReference type="IntAct" id="O14460">
    <property type="interactions" value="2"/>
</dbReference>
<dbReference type="MINT" id="O14460"/>
<dbReference type="STRING" id="284812.O14460"/>
<dbReference type="iPTMnet" id="O14460"/>
<dbReference type="PaxDb" id="4896-SPAC513.01c.1"/>
<dbReference type="EnsemblFungi" id="SPAC513.01c.1">
    <property type="protein sequence ID" value="SPAC513.01c.1:pep"/>
    <property type="gene ID" value="SPAC513.01c"/>
</dbReference>
<dbReference type="EnsemblFungi" id="SPCP31B10.07.1">
    <property type="protein sequence ID" value="SPCP31B10.07.1:pep"/>
    <property type="gene ID" value="SPCP31B10.07"/>
</dbReference>
<dbReference type="GeneID" id="2539544"/>
<dbReference type="KEGG" id="spo:2539544"/>
<dbReference type="PomBase" id="SPAC513.01c">
    <property type="gene designation" value="eft201"/>
</dbReference>
<dbReference type="PomBase" id="SPCP31B10.07">
    <property type="gene designation" value="eft202"/>
</dbReference>
<dbReference type="VEuPathDB" id="FungiDB:SPAC513.01c"/>
<dbReference type="VEuPathDB" id="FungiDB:SPCP31B10.07"/>
<dbReference type="eggNOG" id="KOG0469">
    <property type="taxonomic scope" value="Eukaryota"/>
</dbReference>
<dbReference type="HOGENOM" id="CLU_002794_11_1_1"/>
<dbReference type="InParanoid" id="O14460"/>
<dbReference type="OMA" id="ASWNTEN"/>
<dbReference type="PhylomeDB" id="O14460"/>
<dbReference type="Reactome" id="R-SPO-156902">
    <property type="pathway name" value="Peptide chain elongation"/>
</dbReference>
<dbReference type="Reactome" id="R-SPO-5358493">
    <property type="pathway name" value="Synthesis of diphthamide-EEF2"/>
</dbReference>
<dbReference type="Reactome" id="R-SPO-6798695">
    <property type="pathway name" value="Neutrophil degranulation"/>
</dbReference>
<dbReference type="Reactome" id="R-SPO-8876725">
    <property type="pathway name" value="Protein methylation"/>
</dbReference>
<dbReference type="PRO" id="PR:O14460"/>
<dbReference type="Proteomes" id="UP000002485">
    <property type="component" value="Chromosome I"/>
</dbReference>
<dbReference type="Proteomes" id="UP000002485">
    <property type="component" value="Chromosome III"/>
</dbReference>
<dbReference type="GO" id="GO:0005737">
    <property type="term" value="C:cytoplasm"/>
    <property type="evidence" value="ECO:0007005"/>
    <property type="project" value="PomBase"/>
</dbReference>
<dbReference type="GO" id="GO:0005829">
    <property type="term" value="C:cytosol"/>
    <property type="evidence" value="ECO:0007005"/>
    <property type="project" value="PomBase"/>
</dbReference>
<dbReference type="GO" id="GO:1990904">
    <property type="term" value="C:ribonucleoprotein complex"/>
    <property type="evidence" value="ECO:0000318"/>
    <property type="project" value="GO_Central"/>
</dbReference>
<dbReference type="GO" id="GO:0005525">
    <property type="term" value="F:GTP binding"/>
    <property type="evidence" value="ECO:0000255"/>
    <property type="project" value="PomBase"/>
</dbReference>
<dbReference type="GO" id="GO:0003924">
    <property type="term" value="F:GTPase activity"/>
    <property type="evidence" value="ECO:0000318"/>
    <property type="project" value="GO_Central"/>
</dbReference>
<dbReference type="GO" id="GO:0043022">
    <property type="term" value="F:ribosome binding"/>
    <property type="evidence" value="ECO:0000318"/>
    <property type="project" value="GO_Central"/>
</dbReference>
<dbReference type="GO" id="GO:0003746">
    <property type="term" value="F:translation elongation factor activity"/>
    <property type="evidence" value="ECO:0000266"/>
    <property type="project" value="PomBase"/>
</dbReference>
<dbReference type="GO" id="GO:0002182">
    <property type="term" value="P:cytoplasmic translational elongation"/>
    <property type="evidence" value="ECO:0000266"/>
    <property type="project" value="PomBase"/>
</dbReference>
<dbReference type="GO" id="GO:0006414">
    <property type="term" value="P:translational elongation"/>
    <property type="evidence" value="ECO:0000318"/>
    <property type="project" value="GO_Central"/>
</dbReference>
<dbReference type="CDD" id="cd01681">
    <property type="entry name" value="aeEF2_snRNP_like_IV"/>
    <property type="match status" value="1"/>
</dbReference>
<dbReference type="CDD" id="cd04096">
    <property type="entry name" value="eEF2_snRNP_like_C"/>
    <property type="match status" value="1"/>
</dbReference>
<dbReference type="CDD" id="cd01885">
    <property type="entry name" value="EF2"/>
    <property type="match status" value="1"/>
</dbReference>
<dbReference type="CDD" id="cd16261">
    <property type="entry name" value="EF2_snRNP_III"/>
    <property type="match status" value="1"/>
</dbReference>
<dbReference type="FunFam" id="2.40.30.10:FF:000010">
    <property type="entry name" value="Translation elongation factor 2"/>
    <property type="match status" value="1"/>
</dbReference>
<dbReference type="FunFam" id="3.30.230.10:FF:000006">
    <property type="entry name" value="Translation elongation factor 2"/>
    <property type="match status" value="1"/>
</dbReference>
<dbReference type="FunFam" id="3.30.70.240:FF:000003">
    <property type="entry name" value="Translation elongation factor 2"/>
    <property type="match status" value="1"/>
</dbReference>
<dbReference type="FunFam" id="3.30.70.870:FF:000002">
    <property type="entry name" value="Translation elongation factor 2"/>
    <property type="match status" value="1"/>
</dbReference>
<dbReference type="FunFam" id="3.40.50.300:FF:000058">
    <property type="entry name" value="Translation elongation factor 2"/>
    <property type="match status" value="1"/>
</dbReference>
<dbReference type="Gene3D" id="3.30.230.10">
    <property type="match status" value="1"/>
</dbReference>
<dbReference type="Gene3D" id="3.30.70.240">
    <property type="match status" value="1"/>
</dbReference>
<dbReference type="Gene3D" id="3.30.70.870">
    <property type="entry name" value="Elongation Factor G (Translational Gtpase), domain 3"/>
    <property type="match status" value="1"/>
</dbReference>
<dbReference type="Gene3D" id="3.40.50.300">
    <property type="entry name" value="P-loop containing nucleotide triphosphate hydrolases"/>
    <property type="match status" value="1"/>
</dbReference>
<dbReference type="Gene3D" id="2.40.30.10">
    <property type="entry name" value="Translation factors"/>
    <property type="match status" value="1"/>
</dbReference>
<dbReference type="InterPro" id="IPR041095">
    <property type="entry name" value="EFG_II"/>
</dbReference>
<dbReference type="InterPro" id="IPR035647">
    <property type="entry name" value="EFG_III/V"/>
</dbReference>
<dbReference type="InterPro" id="IPR000640">
    <property type="entry name" value="EFG_V-like"/>
</dbReference>
<dbReference type="InterPro" id="IPR004161">
    <property type="entry name" value="EFTu-like_2"/>
</dbReference>
<dbReference type="InterPro" id="IPR031157">
    <property type="entry name" value="G_TR_CS"/>
</dbReference>
<dbReference type="InterPro" id="IPR027417">
    <property type="entry name" value="P-loop_NTPase"/>
</dbReference>
<dbReference type="InterPro" id="IPR020568">
    <property type="entry name" value="Ribosomal_Su5_D2-typ_SF"/>
</dbReference>
<dbReference type="InterPro" id="IPR014721">
    <property type="entry name" value="Ribsml_uS5_D2-typ_fold_subgr"/>
</dbReference>
<dbReference type="InterPro" id="IPR005225">
    <property type="entry name" value="Small_GTP-bd"/>
</dbReference>
<dbReference type="InterPro" id="IPR000795">
    <property type="entry name" value="T_Tr_GTP-bd_dom"/>
</dbReference>
<dbReference type="InterPro" id="IPR009000">
    <property type="entry name" value="Transl_B-barrel_sf"/>
</dbReference>
<dbReference type="InterPro" id="IPR005517">
    <property type="entry name" value="Transl_elong_EFG/EF2_IV"/>
</dbReference>
<dbReference type="NCBIfam" id="TIGR00231">
    <property type="entry name" value="small_GTP"/>
    <property type="match status" value="1"/>
</dbReference>
<dbReference type="PANTHER" id="PTHR42908:SF10">
    <property type="entry name" value="EUKARYOTIC TRANSLATION ELONGATION FACTOR 2"/>
    <property type="match status" value="1"/>
</dbReference>
<dbReference type="PANTHER" id="PTHR42908">
    <property type="entry name" value="TRANSLATION ELONGATION FACTOR-RELATED"/>
    <property type="match status" value="1"/>
</dbReference>
<dbReference type="Pfam" id="PF00679">
    <property type="entry name" value="EFG_C"/>
    <property type="match status" value="1"/>
</dbReference>
<dbReference type="Pfam" id="PF14492">
    <property type="entry name" value="EFG_III"/>
    <property type="match status" value="1"/>
</dbReference>
<dbReference type="Pfam" id="PF03764">
    <property type="entry name" value="EFG_IV"/>
    <property type="match status" value="1"/>
</dbReference>
<dbReference type="Pfam" id="PF00009">
    <property type="entry name" value="GTP_EFTU"/>
    <property type="match status" value="1"/>
</dbReference>
<dbReference type="Pfam" id="PF03144">
    <property type="entry name" value="GTP_EFTU_D2"/>
    <property type="match status" value="1"/>
</dbReference>
<dbReference type="PRINTS" id="PR00315">
    <property type="entry name" value="ELONGATNFCT"/>
</dbReference>
<dbReference type="SMART" id="SM00838">
    <property type="entry name" value="EFG_C"/>
    <property type="match status" value="1"/>
</dbReference>
<dbReference type="SMART" id="SM00889">
    <property type="entry name" value="EFG_IV"/>
    <property type="match status" value="1"/>
</dbReference>
<dbReference type="SUPFAM" id="SSF54980">
    <property type="entry name" value="EF-G C-terminal domain-like"/>
    <property type="match status" value="2"/>
</dbReference>
<dbReference type="SUPFAM" id="SSF52540">
    <property type="entry name" value="P-loop containing nucleoside triphosphate hydrolases"/>
    <property type="match status" value="1"/>
</dbReference>
<dbReference type="SUPFAM" id="SSF54211">
    <property type="entry name" value="Ribosomal protein S5 domain 2-like"/>
    <property type="match status" value="1"/>
</dbReference>
<dbReference type="SUPFAM" id="SSF50447">
    <property type="entry name" value="Translation proteins"/>
    <property type="match status" value="1"/>
</dbReference>
<dbReference type="PROSITE" id="PS00301">
    <property type="entry name" value="G_TR_1"/>
    <property type="match status" value="1"/>
</dbReference>
<dbReference type="PROSITE" id="PS51722">
    <property type="entry name" value="G_TR_2"/>
    <property type="match status" value="1"/>
</dbReference>
<proteinExistence type="evidence at protein level"/>
<protein>
    <recommendedName>
        <fullName>Elongation factor 2</fullName>
        <shortName>EF-2</shortName>
    </recommendedName>
</protein>
<keyword id="KW-0963">Cytoplasm</keyword>
<keyword id="KW-0251">Elongation factor</keyword>
<keyword id="KW-0342">GTP-binding</keyword>
<keyword id="KW-0547">Nucleotide-binding</keyword>
<keyword id="KW-0597">Phosphoprotein</keyword>
<keyword id="KW-0648">Protein biosynthesis</keyword>
<keyword id="KW-1185">Reference proteome</keyword>
<feature type="chain" id="PRO_0000091023" description="Elongation factor 2">
    <location>
        <begin position="1"/>
        <end position="842"/>
    </location>
</feature>
<feature type="domain" description="tr-type G" evidence="2">
    <location>
        <begin position="17"/>
        <end position="253"/>
    </location>
</feature>
<feature type="binding site" evidence="1">
    <location>
        <begin position="26"/>
        <end position="33"/>
    </location>
    <ligand>
        <name>GTP</name>
        <dbReference type="ChEBI" id="CHEBI:37565"/>
    </ligand>
</feature>
<feature type="binding site" evidence="1">
    <location>
        <begin position="104"/>
        <end position="108"/>
    </location>
    <ligand>
        <name>GTP</name>
        <dbReference type="ChEBI" id="CHEBI:37565"/>
    </ligand>
</feature>
<feature type="binding site" evidence="1">
    <location>
        <begin position="158"/>
        <end position="161"/>
    </location>
    <ligand>
        <name>GTP</name>
        <dbReference type="ChEBI" id="CHEBI:37565"/>
    </ligand>
</feature>
<feature type="modified residue" description="Phosphoserine" evidence="3">
    <location>
        <position position="568"/>
    </location>
</feature>
<feature type="modified residue" description="Phosphothreonine" evidence="3">
    <location>
        <position position="574"/>
    </location>
</feature>
<feature type="modified residue" description="Diphthamide" evidence="1">
    <location>
        <position position="699"/>
    </location>
</feature>
<feature type="sequence conflict" description="In Ref. 3; BAA13813." evidence="4" ref="3">
    <original>V</original>
    <variation>D</variation>
    <location>
        <position position="323"/>
    </location>
</feature>
<feature type="sequence conflict" description="In Ref. 3; BAA13813." evidence="4" ref="3">
    <original>V</original>
    <variation>A</variation>
    <location>
        <position position="464"/>
    </location>
</feature>
<feature type="sequence conflict" description="In Ref. 1; BAA23591/BAA23590." evidence="4" ref="1">
    <original>EAR</original>
    <variation>DVG</variation>
    <location>
        <begin position="821"/>
        <end position="823"/>
    </location>
</feature>
<name>EF2_SCHPO</name>
<accession>O14460</accession>
<accession>P78802</accession>
<accession>Q9USG7</accession>
<accession>Q9USZ9</accession>
<accession>Q9UT64</accession>
<evidence type="ECO:0000250" key="1"/>
<evidence type="ECO:0000255" key="2">
    <source>
        <dbReference type="PROSITE-ProRule" id="PRU01059"/>
    </source>
</evidence>
<evidence type="ECO:0000269" key="3">
    <source>
    </source>
</evidence>
<evidence type="ECO:0000305" key="4"/>
<comment type="function">
    <text evidence="1">Catalyzes the GTP-dependent ribosomal translocation step during translation elongation. During this step, the ribosome changes from the pre-translocational (PRE) to the post-translocational (POST) state as the newly formed A-site-bound peptidyl-tRNA and P-site-bound deacylated tRNA move to the P and E sites, respectively. Catalyzes the coordinated movement of the two tRNA molecules, the mRNA and conformational changes in the ribosome (By similarity).</text>
</comment>
<comment type="subcellular location">
    <subcellularLocation>
        <location evidence="1">Cytoplasm</location>
    </subcellularLocation>
</comment>
<comment type="similarity">
    <text evidence="2">Belongs to the TRAFAC class translation factor GTPase superfamily. Classic translation factor GTPase family. EF-G/EF-2 subfamily.</text>
</comment>
<comment type="sequence caution" evidence="4">
    <conflict type="frameshift">
        <sequence resource="EMBL-CDS" id="BAA13813"/>
    </conflict>
</comment>